<organism>
    <name type="scientific">Staphylococcus aureus (strain Mu3 / ATCC 700698)</name>
    <dbReference type="NCBI Taxonomy" id="418127"/>
    <lineage>
        <taxon>Bacteria</taxon>
        <taxon>Bacillati</taxon>
        <taxon>Bacillota</taxon>
        <taxon>Bacilli</taxon>
        <taxon>Bacillales</taxon>
        <taxon>Staphylococcaceae</taxon>
        <taxon>Staphylococcus</taxon>
    </lineage>
</organism>
<proteinExistence type="inferred from homology"/>
<evidence type="ECO:0000255" key="1">
    <source>
        <dbReference type="HAMAP-Rule" id="MF_01575"/>
    </source>
</evidence>
<protein>
    <recommendedName>
        <fullName evidence="1">UPF0398 protein SAHV_1435</fullName>
    </recommendedName>
</protein>
<name>Y1435_STAA1</name>
<gene>
    <name type="ordered locus">SAHV_1435</name>
</gene>
<sequence length="187" mass="22191">MVKTVYVTGYKSFELNIFKDDAPEVHYLKQFIKHKIEQLLDEGLEWVLIQGQMGIELWTAEVVIELQRTYDSLKFAVITPFQGHTEKWNEHNQSKYANIIKHADYVDSIFHTSYQGPFQFKQADQFMLEHSDQTLLIYDEEQEASPKFFKQMLVDFMDKTNYTCDIVTFDELTAFINDLQWSEDQSF</sequence>
<dbReference type="EMBL" id="AP009324">
    <property type="protein sequence ID" value="BAF78318.1"/>
    <property type="molecule type" value="Genomic_DNA"/>
</dbReference>
<dbReference type="RefSeq" id="WP_000241308.1">
    <property type="nucleotide sequence ID" value="NZ_CTYB01000006.1"/>
</dbReference>
<dbReference type="SMR" id="A7X2E0"/>
<dbReference type="KEGG" id="saw:SAHV_1435"/>
<dbReference type="HOGENOM" id="CLU_105319_0_0_9"/>
<dbReference type="Gene3D" id="3.40.50.450">
    <property type="match status" value="1"/>
</dbReference>
<dbReference type="HAMAP" id="MF_01575">
    <property type="entry name" value="UPF0398"/>
    <property type="match status" value="1"/>
</dbReference>
<dbReference type="InterPro" id="IPR010697">
    <property type="entry name" value="YspA"/>
</dbReference>
<dbReference type="NCBIfam" id="NF010181">
    <property type="entry name" value="PRK13660.1"/>
    <property type="match status" value="1"/>
</dbReference>
<dbReference type="PANTHER" id="PTHR38440:SF1">
    <property type="entry name" value="UPF0398 PROTEIN SPR0331"/>
    <property type="match status" value="1"/>
</dbReference>
<dbReference type="PANTHER" id="PTHR38440">
    <property type="entry name" value="UPF0398 PROTEIN YPSA"/>
    <property type="match status" value="1"/>
</dbReference>
<dbReference type="Pfam" id="PF06908">
    <property type="entry name" value="YpsA"/>
    <property type="match status" value="1"/>
</dbReference>
<dbReference type="PIRSF" id="PIRSF021290">
    <property type="entry name" value="DUF1273"/>
    <property type="match status" value="1"/>
</dbReference>
<dbReference type="SUPFAM" id="SSF102405">
    <property type="entry name" value="MCP/YpsA-like"/>
    <property type="match status" value="1"/>
</dbReference>
<reference key="1">
    <citation type="journal article" date="2008" name="Antimicrob. Agents Chemother.">
        <title>Mutated response regulator graR is responsible for phenotypic conversion of Staphylococcus aureus from heterogeneous vancomycin-intermediate resistance to vancomycin-intermediate resistance.</title>
        <authorList>
            <person name="Neoh H.-M."/>
            <person name="Cui L."/>
            <person name="Yuzawa H."/>
            <person name="Takeuchi F."/>
            <person name="Matsuo M."/>
            <person name="Hiramatsu K."/>
        </authorList>
    </citation>
    <scope>NUCLEOTIDE SEQUENCE [LARGE SCALE GENOMIC DNA]</scope>
    <source>
        <strain>Mu3 / ATCC 700698</strain>
    </source>
</reference>
<accession>A7X2E0</accession>
<feature type="chain" id="PRO_1000069219" description="UPF0398 protein SAHV_1435">
    <location>
        <begin position="1"/>
        <end position="187"/>
    </location>
</feature>
<comment type="similarity">
    <text evidence="1">Belongs to the UPF0398 family.</text>
</comment>